<evidence type="ECO:0000255" key="1">
    <source>
        <dbReference type="PROSITE-ProRule" id="PRU00422"/>
    </source>
</evidence>
<evidence type="ECO:0000269" key="2">
    <source>
    </source>
</evidence>
<evidence type="ECO:0000269" key="3">
    <source>
    </source>
</evidence>
<evidence type="ECO:0000269" key="4">
    <source>
    </source>
</evidence>
<evidence type="ECO:0000303" key="5">
    <source>
    </source>
</evidence>
<evidence type="ECO:0000305" key="6"/>
<evidence type="ECO:0000305" key="7">
    <source>
    </source>
</evidence>
<name>PTKB_ECOLI</name>
<gene>
    <name evidence="5" type="primary">gatB</name>
    <name type="ordered locus">b2093</name>
    <name type="ordered locus">JW2077</name>
</gene>
<protein>
    <recommendedName>
        <fullName evidence="5">PTS system galactitol-specific EIIB component</fullName>
    </recommendedName>
    <alternativeName>
        <fullName evidence="5">EIIB-Gat</fullName>
    </alternativeName>
    <alternativeName>
        <fullName evidence="5">Galactitol-specific phosphotransferase enzyme IIB component</fullName>
        <ecNumber evidence="2">2.7.1.200</ecNumber>
    </alternativeName>
</protein>
<comment type="function">
    <text evidence="2 4">The phosphoenolpyruvate-dependent sugar phosphotransferase system (PTS), a major carbohydrate active transport system, catalyzes the phosphorylation of incoming sugar substrates concomitant with their translocation across the cell membrane. The enzyme II complex composed of GatA, GatB and GatC is involved in galactitol transport. It can also use D-glucitol.</text>
</comment>
<comment type="catalytic activity">
    <reaction evidence="2">
        <text>galactitol(out) + N(pros)-phospho-L-histidyl-[protein] = galactitol 1-phosphate(in) + L-histidyl-[protein]</text>
        <dbReference type="Rhea" id="RHEA:49248"/>
        <dbReference type="Rhea" id="RHEA-COMP:9745"/>
        <dbReference type="Rhea" id="RHEA-COMP:9746"/>
        <dbReference type="ChEBI" id="CHEBI:16813"/>
        <dbReference type="ChEBI" id="CHEBI:29979"/>
        <dbReference type="ChEBI" id="CHEBI:60083"/>
        <dbReference type="ChEBI" id="CHEBI:64837"/>
        <dbReference type="EC" id="2.7.1.200"/>
    </reaction>
</comment>
<comment type="biophysicochemical properties">
    <kinetics>
        <KM evidence="2">4.4 uM for D-galactitol</KM>
        <KM evidence="2">800 uM for D-glucitol</KM>
        <Vmax evidence="2">3.2 nmol/min/mg enzyme with D-galactitol as substrate</Vmax>
        <Vmax evidence="2">3.2 nmol/min/mg enzyme with D-glucitol as substrate</Vmax>
    </kinetics>
</comment>
<comment type="subunit">
    <text evidence="3">Forms a complex with one each of subunit of GatA, GatB and 2 subunits of GatC.</text>
</comment>
<comment type="subcellular location">
    <subcellularLocation>
        <location evidence="7">Cytoplasm</location>
    </subcellularLocation>
</comment>
<comment type="induction">
    <text evidence="4">Constitutively expressed.</text>
</comment>
<comment type="domain">
    <text evidence="1">The EIIB domain is phosphorylated by phospho-EIIA on a cysteinyl or histidyl residue, depending on the transported sugar. Then, it transfers the phosphoryl group to the sugar substrate concomitantly with the sugar uptake processed by the EIIC domain.</text>
</comment>
<keyword id="KW-0963">Cytoplasm</keyword>
<keyword id="KW-0903">Direct protein sequencing</keyword>
<keyword id="KW-0298">Galactitol metabolism</keyword>
<keyword id="KW-0597">Phosphoprotein</keyword>
<keyword id="KW-0598">Phosphotransferase system</keyword>
<keyword id="KW-1185">Reference proteome</keyword>
<keyword id="KW-0762">Sugar transport</keyword>
<keyword id="KW-0808">Transferase</keyword>
<keyword id="KW-0813">Transport</keyword>
<sequence>MKRKIIVACGGAVATSTMAAEEIKELCQNHNIPVELIQCRVNEIETYMDGVHLICTTAKVDRSFGDIPLVHGMPFISGIGIEALQNKILTILQG</sequence>
<dbReference type="EC" id="2.7.1.200" evidence="2"/>
<dbReference type="EMBL" id="X79837">
    <property type="protein sequence ID" value="CAA56229.1"/>
    <property type="molecule type" value="Genomic_DNA"/>
</dbReference>
<dbReference type="EMBL" id="U00096">
    <property type="protein sequence ID" value="AAC75154.1"/>
    <property type="molecule type" value="Genomic_DNA"/>
</dbReference>
<dbReference type="EMBL" id="AP009048">
    <property type="protein sequence ID" value="BAA15956.1"/>
    <property type="molecule type" value="Genomic_DNA"/>
</dbReference>
<dbReference type="PIR" id="D64976">
    <property type="entry name" value="D64976"/>
</dbReference>
<dbReference type="PIR" id="S55904">
    <property type="entry name" value="S55904"/>
</dbReference>
<dbReference type="RefSeq" id="NP_416596.1">
    <property type="nucleotide sequence ID" value="NC_000913.3"/>
</dbReference>
<dbReference type="RefSeq" id="WP_000823270.1">
    <property type="nucleotide sequence ID" value="NZ_SSZK01000011.1"/>
</dbReference>
<dbReference type="SMR" id="P37188"/>
<dbReference type="BioGRID" id="4263510">
    <property type="interactions" value="11"/>
</dbReference>
<dbReference type="BioGRID" id="850956">
    <property type="interactions" value="1"/>
</dbReference>
<dbReference type="ComplexPortal" id="CPX-5942">
    <property type="entry name" value="Galactitol-specific enzyme II complex"/>
</dbReference>
<dbReference type="DIP" id="DIP-9744N"/>
<dbReference type="FunCoup" id="P37188">
    <property type="interactions" value="178"/>
</dbReference>
<dbReference type="IntAct" id="P37188">
    <property type="interactions" value="7"/>
</dbReference>
<dbReference type="STRING" id="511145.b2093"/>
<dbReference type="TCDB" id="4.A.5.1.1">
    <property type="family name" value="the pts galactitol (gat) family"/>
</dbReference>
<dbReference type="jPOST" id="P37188"/>
<dbReference type="PaxDb" id="511145-b2093"/>
<dbReference type="EnsemblBacteria" id="AAC75154">
    <property type="protein sequence ID" value="AAC75154"/>
    <property type="gene ID" value="b2093"/>
</dbReference>
<dbReference type="GeneID" id="946610"/>
<dbReference type="KEGG" id="ecj:JW2077"/>
<dbReference type="KEGG" id="eco:b2093"/>
<dbReference type="KEGG" id="ecoc:C3026_11750"/>
<dbReference type="PATRIC" id="fig|1411691.4.peg.157"/>
<dbReference type="EchoBASE" id="EB2314"/>
<dbReference type="eggNOG" id="COG3414">
    <property type="taxonomic scope" value="Bacteria"/>
</dbReference>
<dbReference type="HOGENOM" id="CLU_159248_3_3_6"/>
<dbReference type="InParanoid" id="P37188"/>
<dbReference type="OMA" id="AHLICTT"/>
<dbReference type="OrthoDB" id="6505030at2"/>
<dbReference type="PhylomeDB" id="P37188"/>
<dbReference type="BioCyc" id="EcoCyc:GATB-MONOMER"/>
<dbReference type="BioCyc" id="MetaCyc:MONOMER-124141"/>
<dbReference type="BRENDA" id="2.7.1.200">
    <property type="organism ID" value="2026"/>
</dbReference>
<dbReference type="PRO" id="PR:P37188"/>
<dbReference type="Proteomes" id="UP000000625">
    <property type="component" value="Chromosome"/>
</dbReference>
<dbReference type="GO" id="GO:0005829">
    <property type="term" value="C:cytosol"/>
    <property type="evidence" value="ECO:0000314"/>
    <property type="project" value="EcoCyc"/>
</dbReference>
<dbReference type="GO" id="GO:1902495">
    <property type="term" value="C:transmembrane transporter complex"/>
    <property type="evidence" value="ECO:0000303"/>
    <property type="project" value="ComplexPortal"/>
</dbReference>
<dbReference type="GO" id="GO:0008982">
    <property type="term" value="F:protein-N(PI)-phosphohistidine-sugar phosphotransferase activity"/>
    <property type="evidence" value="ECO:0007669"/>
    <property type="project" value="InterPro"/>
</dbReference>
<dbReference type="GO" id="GO:0090584">
    <property type="term" value="F:protein-phosphocysteine-galactitol-phosphotransferase system transporter activity"/>
    <property type="evidence" value="ECO:0000314"/>
    <property type="project" value="EcoCyc"/>
</dbReference>
<dbReference type="GO" id="GO:0019402">
    <property type="term" value="P:galactitol metabolic process"/>
    <property type="evidence" value="ECO:0007669"/>
    <property type="project" value="UniProtKB-KW"/>
</dbReference>
<dbReference type="GO" id="GO:0015796">
    <property type="term" value="P:galactitol transmembrane transport"/>
    <property type="evidence" value="ECO:0000314"/>
    <property type="project" value="EcoCyc"/>
</dbReference>
<dbReference type="GO" id="GO:0009401">
    <property type="term" value="P:phosphoenolpyruvate-dependent sugar phosphotransferase system"/>
    <property type="evidence" value="ECO:0000314"/>
    <property type="project" value="EcoCyc"/>
</dbReference>
<dbReference type="CDD" id="cd05566">
    <property type="entry name" value="PTS_IIB_galactitol"/>
    <property type="match status" value="1"/>
</dbReference>
<dbReference type="Gene3D" id="3.40.50.2300">
    <property type="match status" value="1"/>
</dbReference>
<dbReference type="InterPro" id="IPR036095">
    <property type="entry name" value="PTS_EIIB-like_sf"/>
</dbReference>
<dbReference type="InterPro" id="IPR013011">
    <property type="entry name" value="PTS_EIIB_2"/>
</dbReference>
<dbReference type="InterPro" id="IPR003501">
    <property type="entry name" value="PTS_EIIB_2/3"/>
</dbReference>
<dbReference type="NCBIfam" id="NF007643">
    <property type="entry name" value="PRK10310.1"/>
    <property type="match status" value="1"/>
</dbReference>
<dbReference type="Pfam" id="PF02302">
    <property type="entry name" value="PTS_IIB"/>
    <property type="match status" value="1"/>
</dbReference>
<dbReference type="SUPFAM" id="SSF52794">
    <property type="entry name" value="PTS system IIB component-like"/>
    <property type="match status" value="1"/>
</dbReference>
<dbReference type="PROSITE" id="PS51099">
    <property type="entry name" value="PTS_EIIB_TYPE_2"/>
    <property type="match status" value="1"/>
</dbReference>
<feature type="chain" id="PRO_0000186572" description="PTS system galactitol-specific EIIB component">
    <location>
        <begin position="1"/>
        <end position="94"/>
    </location>
</feature>
<feature type="domain" description="PTS EIIB type-2" evidence="1">
    <location>
        <begin position="1"/>
        <end position="94"/>
    </location>
</feature>
<feature type="active site" description="Phosphocysteine intermediate; for EIIB activity" evidence="6">
    <location>
        <position position="9"/>
    </location>
</feature>
<feature type="modified residue" description="Phosphocysteine; by EIIA" evidence="6">
    <location>
        <position position="9"/>
    </location>
</feature>
<feature type="sequence conflict" description="In Ref. 5; AA sequence." evidence="6" ref="5">
    <original>C</original>
    <variation>E</variation>
    <location>
        <position position="9"/>
    </location>
</feature>
<feature type="sequence conflict" description="In Ref. 1; CAA56229." evidence="6" ref="1">
    <original>N</original>
    <variation>S</variation>
    <location>
        <position position="29"/>
    </location>
</feature>
<feature type="sequence conflict" description="In Ref. 1; CAA56229." evidence="6" ref="1">
    <original>K</original>
    <variation>R</variation>
    <location>
        <position position="59"/>
    </location>
</feature>
<feature type="sequence conflict" description="In Ref. 1; CAA56229." evidence="6" ref="1">
    <original>I</original>
    <variation>V</variation>
    <location>
        <position position="76"/>
    </location>
</feature>
<feature type="sequence conflict" description="In Ref. 1; CAA56229." evidence="6" ref="1">
    <original>I</original>
    <variation>V</variation>
    <location>
        <position position="79"/>
    </location>
</feature>
<reference key="1">
    <citation type="journal article" date="1995" name="Biochim. Biophys. Acta">
        <title>Sequence of the gat operon for galactitol utilization from a wild-type strain EC3132 of Escherichia coli.</title>
        <authorList>
            <person name="Nobelmann B."/>
            <person name="Lengeler J.W."/>
        </authorList>
    </citation>
    <scope>NUCLEOTIDE SEQUENCE [GENOMIC DNA]</scope>
    <source>
        <strain>EC3132</strain>
    </source>
</reference>
<reference key="2">
    <citation type="journal article" date="1996" name="DNA Res.">
        <title>A 460-kb DNA sequence of the Escherichia coli K-12 genome corresponding to the 40.1-50.0 min region on the linkage map.</title>
        <authorList>
            <person name="Itoh T."/>
            <person name="Aiba H."/>
            <person name="Baba T."/>
            <person name="Fujita K."/>
            <person name="Hayashi K."/>
            <person name="Inada T."/>
            <person name="Isono K."/>
            <person name="Kasai H."/>
            <person name="Kimura S."/>
            <person name="Kitakawa M."/>
            <person name="Kitagawa M."/>
            <person name="Makino K."/>
            <person name="Miki T."/>
            <person name="Mizobuchi K."/>
            <person name="Mori H."/>
            <person name="Mori T."/>
            <person name="Motomura K."/>
            <person name="Nakade S."/>
            <person name="Nakamura Y."/>
            <person name="Nashimoto H."/>
            <person name="Nishio Y."/>
            <person name="Oshima T."/>
            <person name="Saito N."/>
            <person name="Sampei G."/>
            <person name="Seki Y."/>
            <person name="Sivasundaram S."/>
            <person name="Tagami H."/>
            <person name="Takeda J."/>
            <person name="Takemoto K."/>
            <person name="Wada C."/>
            <person name="Yamamoto Y."/>
            <person name="Horiuchi T."/>
        </authorList>
    </citation>
    <scope>NUCLEOTIDE SEQUENCE [LARGE SCALE GENOMIC DNA]</scope>
    <source>
        <strain>K12 / W3110 / ATCC 27325 / DSM 5911</strain>
    </source>
</reference>
<reference key="3">
    <citation type="journal article" date="1997" name="Science">
        <title>The complete genome sequence of Escherichia coli K-12.</title>
        <authorList>
            <person name="Blattner F.R."/>
            <person name="Plunkett G. III"/>
            <person name="Bloch C.A."/>
            <person name="Perna N.T."/>
            <person name="Burland V."/>
            <person name="Riley M."/>
            <person name="Collado-Vides J."/>
            <person name="Glasner J.D."/>
            <person name="Rode C.K."/>
            <person name="Mayhew G.F."/>
            <person name="Gregor J."/>
            <person name="Davis N.W."/>
            <person name="Kirkpatrick H.A."/>
            <person name="Goeden M.A."/>
            <person name="Rose D.J."/>
            <person name="Mau B."/>
            <person name="Shao Y."/>
        </authorList>
    </citation>
    <scope>NUCLEOTIDE SEQUENCE [LARGE SCALE GENOMIC DNA]</scope>
    <source>
        <strain>K12 / MG1655 / ATCC 47076</strain>
    </source>
</reference>
<reference key="4">
    <citation type="journal article" date="2006" name="Mol. Syst. Biol.">
        <title>Highly accurate genome sequences of Escherichia coli K-12 strains MG1655 and W3110.</title>
        <authorList>
            <person name="Hayashi K."/>
            <person name="Morooka N."/>
            <person name="Yamamoto Y."/>
            <person name="Fujita K."/>
            <person name="Isono K."/>
            <person name="Choi S."/>
            <person name="Ohtsubo E."/>
            <person name="Baba T."/>
            <person name="Wanner B.L."/>
            <person name="Mori H."/>
            <person name="Horiuchi T."/>
        </authorList>
    </citation>
    <scope>NUCLEOTIDE SEQUENCE [LARGE SCALE GENOMIC DNA]</scope>
    <source>
        <strain>K12 / W3110 / ATCC 27325 / DSM 5911</strain>
    </source>
</reference>
<reference key="5">
    <citation type="journal article" date="1998" name="FEMS Microbiol. Lett.">
        <title>Small genes/gene-products in Escherichia coli K-12.</title>
        <authorList>
            <person name="Wasinger V.C."/>
            <person name="Humphery-Smith I."/>
        </authorList>
    </citation>
    <scope>PROTEIN SEQUENCE OF 1-20</scope>
    <source>
        <strain>K12</strain>
    </source>
</reference>
<reference key="6">
    <citation type="journal article" date="1975" name="J. Bacteriol.">
        <title>Nature and properties of hexitol transport systems in Escherichia coli.</title>
        <authorList>
            <person name="Lengeler J."/>
        </authorList>
    </citation>
    <scope>FUNCTION</scope>
    <scope>CATALYTIC ACTIVITY</scope>
    <scope>BIOPHYSICOCHEMICAL PROPERTIES</scope>
    <scope>SUBSTRATE SPECIFICITY</scope>
</reference>
<reference key="7">
    <citation type="journal article" date="1996" name="J. Bacteriol.">
        <title>Molecular analysis of the gat genes from Escherichia coli and of their roles in galactitol transport and metabolism.</title>
        <authorList>
            <person name="Nobelmann B."/>
            <person name="Lengeler J.W."/>
        </authorList>
    </citation>
    <scope>FUNCTION</scope>
    <scope>SUBCELLULAR LOCATION</scope>
    <scope>INDUCTION</scope>
</reference>
<reference key="8">
    <citation type="journal article" date="2005" name="J. Biol. Chem.">
        <title>Protein complexes of the Escherichia coli cell envelope.</title>
        <authorList>
            <person name="Stenberg F."/>
            <person name="Chovanec P."/>
            <person name="Maslen S.L."/>
            <person name="Robinson C.V."/>
            <person name="Ilag L."/>
            <person name="von Heijne G."/>
            <person name="Daley D.O."/>
        </authorList>
    </citation>
    <scope>SUBUNIT</scope>
    <source>
        <strain>BL21-DE3</strain>
    </source>
</reference>
<organism>
    <name type="scientific">Escherichia coli (strain K12)</name>
    <dbReference type="NCBI Taxonomy" id="83333"/>
    <lineage>
        <taxon>Bacteria</taxon>
        <taxon>Pseudomonadati</taxon>
        <taxon>Pseudomonadota</taxon>
        <taxon>Gammaproteobacteria</taxon>
        <taxon>Enterobacterales</taxon>
        <taxon>Enterobacteriaceae</taxon>
        <taxon>Escherichia</taxon>
    </lineage>
</organism>
<accession>P37188</accession>
<accession>P76412</accession>
<proteinExistence type="evidence at protein level"/>